<keyword id="KW-0025">Alternative splicing</keyword>
<keyword id="KW-0130">Cell adhesion</keyword>
<keyword id="KW-1003">Cell membrane</keyword>
<keyword id="KW-0903">Direct protein sequencing</keyword>
<keyword id="KW-1015">Disulfide bond</keyword>
<keyword id="KW-0325">Glycoprotein</keyword>
<keyword id="KW-0393">Immunoglobulin domain</keyword>
<keyword id="KW-0472">Membrane</keyword>
<keyword id="KW-1185">Reference proteome</keyword>
<keyword id="KW-0677">Repeat</keyword>
<keyword id="KW-0732">Signal</keyword>
<keyword id="KW-0812">Transmembrane</keyword>
<keyword id="KW-1133">Transmembrane helix</keyword>
<dbReference type="EMBL" id="X58482">
    <property type="protein sequence ID" value="CAA41391.1"/>
    <property type="molecule type" value="mRNA"/>
</dbReference>
<dbReference type="EMBL" id="L08960">
    <property type="protein sequence ID" value="AAA48632.1"/>
    <property type="molecule type" value="mRNA"/>
</dbReference>
<dbReference type="PIR" id="A39640">
    <property type="entry name" value="A39640"/>
</dbReference>
<dbReference type="PIR" id="A43425">
    <property type="entry name" value="A43425"/>
</dbReference>
<dbReference type="RefSeq" id="NP_990597.1">
    <property type="nucleotide sequence ID" value="NM_205266.1"/>
</dbReference>
<dbReference type="SMR" id="P35331"/>
<dbReference type="BioGRID" id="676462">
    <property type="interactions" value="1"/>
</dbReference>
<dbReference type="FunCoup" id="P35331">
    <property type="interactions" value="382"/>
</dbReference>
<dbReference type="IntAct" id="P35331">
    <property type="interactions" value="1"/>
</dbReference>
<dbReference type="STRING" id="9031.ENSGALP00000066300"/>
<dbReference type="GlyGen" id="P35331">
    <property type="glycosylation" value="19 sites"/>
</dbReference>
<dbReference type="PaxDb" id="9031-ENSGALP00000015476"/>
<dbReference type="GeneID" id="396202"/>
<dbReference type="KEGG" id="gga:396202"/>
<dbReference type="CTD" id="4897"/>
<dbReference type="VEuPathDB" id="HostDB:geneid_396202"/>
<dbReference type="eggNOG" id="KOG3513">
    <property type="taxonomic scope" value="Eukaryota"/>
</dbReference>
<dbReference type="InParanoid" id="P35331"/>
<dbReference type="OrthoDB" id="6244967at2759"/>
<dbReference type="PhylomeDB" id="P35331"/>
<dbReference type="PRO" id="PR:P35331"/>
<dbReference type="Proteomes" id="UP000000539">
    <property type="component" value="Unassembled WGS sequence"/>
</dbReference>
<dbReference type="GO" id="GO:0030424">
    <property type="term" value="C:axon"/>
    <property type="evidence" value="ECO:0000318"/>
    <property type="project" value="GO_Central"/>
</dbReference>
<dbReference type="GO" id="GO:0005911">
    <property type="term" value="C:cell-cell junction"/>
    <property type="evidence" value="ECO:0000314"/>
    <property type="project" value="AgBase"/>
</dbReference>
<dbReference type="GO" id="GO:0005886">
    <property type="term" value="C:plasma membrane"/>
    <property type="evidence" value="ECO:0000314"/>
    <property type="project" value="AgBase"/>
</dbReference>
<dbReference type="GO" id="GO:0030506">
    <property type="term" value="F:ankyrin binding"/>
    <property type="evidence" value="ECO:0000250"/>
    <property type="project" value="UniProtKB"/>
</dbReference>
<dbReference type="GO" id="GO:0030246">
    <property type="term" value="F:carbohydrate binding"/>
    <property type="evidence" value="ECO:0000314"/>
    <property type="project" value="AgBase"/>
</dbReference>
<dbReference type="GO" id="GO:0050839">
    <property type="term" value="F:cell adhesion molecule binding"/>
    <property type="evidence" value="ECO:0000353"/>
    <property type="project" value="AgBase"/>
</dbReference>
<dbReference type="GO" id="GO:0098632">
    <property type="term" value="F:cell-cell adhesion mediator activity"/>
    <property type="evidence" value="ECO:0000318"/>
    <property type="project" value="GO_Central"/>
</dbReference>
<dbReference type="GO" id="GO:0030247">
    <property type="term" value="F:polysaccharide binding"/>
    <property type="evidence" value="ECO:0000314"/>
    <property type="project" value="AgBase"/>
</dbReference>
<dbReference type="GO" id="GO:0046982">
    <property type="term" value="F:protein heterodimerization activity"/>
    <property type="evidence" value="ECO:0000353"/>
    <property type="project" value="AgBase"/>
</dbReference>
<dbReference type="GO" id="GO:0007411">
    <property type="term" value="P:axon guidance"/>
    <property type="evidence" value="ECO:0000318"/>
    <property type="project" value="GO_Central"/>
</dbReference>
<dbReference type="GO" id="GO:0016339">
    <property type="term" value="P:calcium-dependent cell-cell adhesion via plasma membrane cell adhesion molecules"/>
    <property type="evidence" value="ECO:0000314"/>
    <property type="project" value="AgBase"/>
</dbReference>
<dbReference type="GO" id="GO:0016338">
    <property type="term" value="P:calcium-independent cell-cell adhesion via plasma membrane cell-adhesion molecules"/>
    <property type="evidence" value="ECO:0000314"/>
    <property type="project" value="AgBase"/>
</dbReference>
<dbReference type="GO" id="GO:0098609">
    <property type="term" value="P:cell-cell adhesion"/>
    <property type="evidence" value="ECO:0000318"/>
    <property type="project" value="GO_Central"/>
</dbReference>
<dbReference type="GO" id="GO:0007417">
    <property type="term" value="P:central nervous system development"/>
    <property type="evidence" value="ECO:0000250"/>
    <property type="project" value="UniProtKB"/>
</dbReference>
<dbReference type="GO" id="GO:0045162">
    <property type="term" value="P:clustering of voltage-gated sodium channels"/>
    <property type="evidence" value="ECO:0000250"/>
    <property type="project" value="UniProtKB"/>
</dbReference>
<dbReference type="GO" id="GO:0007156">
    <property type="term" value="P:homophilic cell adhesion via plasma membrane adhesion molecules"/>
    <property type="evidence" value="ECO:0000314"/>
    <property type="project" value="AgBase"/>
</dbReference>
<dbReference type="GO" id="GO:0007158">
    <property type="term" value="P:neuron cell-cell adhesion"/>
    <property type="evidence" value="ECO:0000314"/>
    <property type="project" value="AgBase"/>
</dbReference>
<dbReference type="CDD" id="cd00063">
    <property type="entry name" value="FN3"/>
    <property type="match status" value="5"/>
</dbReference>
<dbReference type="CDD" id="cd05731">
    <property type="entry name" value="Ig3_L1-CAM_like"/>
    <property type="match status" value="1"/>
</dbReference>
<dbReference type="CDD" id="cd05868">
    <property type="entry name" value="Ig4_NrCAM"/>
    <property type="match status" value="1"/>
</dbReference>
<dbReference type="CDD" id="cd05874">
    <property type="entry name" value="IgI_NrCAM"/>
    <property type="match status" value="1"/>
</dbReference>
<dbReference type="FunFam" id="2.60.40.10:FF:000057">
    <property type="entry name" value="neural cell adhesion molecule L1"/>
    <property type="match status" value="1"/>
</dbReference>
<dbReference type="FunFam" id="2.60.40.10:FF:000363">
    <property type="entry name" value="neurofascin isoform X1"/>
    <property type="match status" value="1"/>
</dbReference>
<dbReference type="FunFam" id="2.60.40.10:FF:000512">
    <property type="entry name" value="neurofascin isoform X1"/>
    <property type="match status" value="1"/>
</dbReference>
<dbReference type="FunFam" id="2.60.40.10:FF:000005">
    <property type="entry name" value="Neuronal cell adhesion molecule"/>
    <property type="match status" value="1"/>
</dbReference>
<dbReference type="FunFam" id="2.60.40.10:FF:000038">
    <property type="entry name" value="Neuronal cell adhesion molecule"/>
    <property type="match status" value="1"/>
</dbReference>
<dbReference type="FunFam" id="2.60.40.10:FF:000078">
    <property type="entry name" value="Neuronal cell adhesion molecule"/>
    <property type="match status" value="1"/>
</dbReference>
<dbReference type="FunFam" id="2.60.40.10:FF:000114">
    <property type="entry name" value="Neuronal cell adhesion molecule"/>
    <property type="match status" value="1"/>
</dbReference>
<dbReference type="FunFam" id="2.60.40.10:FF:000347">
    <property type="entry name" value="Neuronal cell adhesion molecule"/>
    <property type="match status" value="1"/>
</dbReference>
<dbReference type="FunFam" id="2.60.40.10:FF:000836">
    <property type="entry name" value="Neuronal cell adhesion molecule"/>
    <property type="match status" value="1"/>
</dbReference>
<dbReference type="FunFam" id="2.60.40.10:FF:000100">
    <property type="entry name" value="Neuronal cell adhesion molecule a"/>
    <property type="match status" value="1"/>
</dbReference>
<dbReference type="FunFam" id="2.60.40.10:FF:000332">
    <property type="entry name" value="neuronal cell adhesion molecule isoform X2"/>
    <property type="match status" value="1"/>
</dbReference>
<dbReference type="Gene3D" id="2.60.40.10">
    <property type="entry name" value="Immunoglobulins"/>
    <property type="match status" value="11"/>
</dbReference>
<dbReference type="InterPro" id="IPR003961">
    <property type="entry name" value="FN3_dom"/>
</dbReference>
<dbReference type="InterPro" id="IPR036116">
    <property type="entry name" value="FN3_sf"/>
</dbReference>
<dbReference type="InterPro" id="IPR007110">
    <property type="entry name" value="Ig-like_dom"/>
</dbReference>
<dbReference type="InterPro" id="IPR036179">
    <property type="entry name" value="Ig-like_dom_sf"/>
</dbReference>
<dbReference type="InterPro" id="IPR013783">
    <property type="entry name" value="Ig-like_fold"/>
</dbReference>
<dbReference type="InterPro" id="IPR013098">
    <property type="entry name" value="Ig_I-set"/>
</dbReference>
<dbReference type="InterPro" id="IPR003599">
    <property type="entry name" value="Ig_sub"/>
</dbReference>
<dbReference type="InterPro" id="IPR003598">
    <property type="entry name" value="Ig_sub2"/>
</dbReference>
<dbReference type="InterPro" id="IPR051170">
    <property type="entry name" value="Neural/epithelial_adhesion"/>
</dbReference>
<dbReference type="InterPro" id="IPR026966">
    <property type="entry name" value="Neurofascin/L1/NrCAM_C"/>
</dbReference>
<dbReference type="PANTHER" id="PTHR12231">
    <property type="entry name" value="CTX-RELATED TYPE I TRANSMEMBRANE PROTEIN"/>
    <property type="match status" value="1"/>
</dbReference>
<dbReference type="PANTHER" id="PTHR12231:SF257">
    <property type="entry name" value="NEURAL CELL ADHESION MOLECULE L1-LIKE PROTEIN"/>
    <property type="match status" value="1"/>
</dbReference>
<dbReference type="Pfam" id="PF13882">
    <property type="entry name" value="Bravo_FIGEY"/>
    <property type="match status" value="1"/>
</dbReference>
<dbReference type="Pfam" id="PF00041">
    <property type="entry name" value="fn3"/>
    <property type="match status" value="4"/>
</dbReference>
<dbReference type="Pfam" id="PF07679">
    <property type="entry name" value="I-set"/>
    <property type="match status" value="3"/>
</dbReference>
<dbReference type="Pfam" id="PF13927">
    <property type="entry name" value="Ig_3"/>
    <property type="match status" value="3"/>
</dbReference>
<dbReference type="SMART" id="SM00060">
    <property type="entry name" value="FN3"/>
    <property type="match status" value="5"/>
</dbReference>
<dbReference type="SMART" id="SM00409">
    <property type="entry name" value="IG"/>
    <property type="match status" value="6"/>
</dbReference>
<dbReference type="SMART" id="SM00408">
    <property type="entry name" value="IGc2"/>
    <property type="match status" value="6"/>
</dbReference>
<dbReference type="SUPFAM" id="SSF49265">
    <property type="entry name" value="Fibronectin type III"/>
    <property type="match status" value="3"/>
</dbReference>
<dbReference type="SUPFAM" id="SSF48726">
    <property type="entry name" value="Immunoglobulin"/>
    <property type="match status" value="6"/>
</dbReference>
<dbReference type="PROSITE" id="PS50853">
    <property type="entry name" value="FN3"/>
    <property type="match status" value="5"/>
</dbReference>
<dbReference type="PROSITE" id="PS50835">
    <property type="entry name" value="IG_LIKE"/>
    <property type="match status" value="6"/>
</dbReference>
<name>NRCAM_CHICK</name>
<comment type="function">
    <text>This protein is a cell adhesion molecule involved in neuron-neuron adhesion, neurite fasciculation, outgrowth of neurites, etc. Specifically involved in the development of optic fibres in the retina.</text>
</comment>
<comment type="subunit">
    <text>Heterodimer of an alpha and a beta chain.</text>
</comment>
<comment type="subcellular location">
    <subcellularLocation>
        <location>Cell membrane</location>
        <topology>Single-pass type I membrane protein</topology>
    </subcellularLocation>
</comment>
<comment type="alternative products">
    <event type="alternative splicing"/>
    <isoform>
        <id>P35331-1</id>
        <name>1</name>
        <sequence type="displayed"/>
    </isoform>
    <isoform>
        <id>P35331-2</id>
        <name>2</name>
        <name>AS10</name>
        <sequence type="described" ref="VSP_002603"/>
    </isoform>
    <isoform>
        <id>P35331-3</id>
        <name>3</name>
        <name>AS12</name>
        <sequence type="described" ref="VSP_002604"/>
    </isoform>
    <isoform>
        <id>P35331-4</id>
        <name>4</name>
        <name>AS93</name>
        <sequence type="described" ref="VSP_002605"/>
    </isoform>
    <isoform>
        <id>P35331-5</id>
        <name>5</name>
        <name>AS-CYT2</name>
        <sequence type="described" ref="VSP_002606"/>
    </isoform>
    <text>Additional isoforms seem to exist.</text>
</comment>
<comment type="tissue specificity">
    <text>Retina and developing brain.</text>
</comment>
<comment type="developmental stage">
    <text>Expressed in developing neural retina and embryonic brain tissue.</text>
</comment>
<comment type="similarity">
    <text evidence="6">Belongs to the immunoglobulin superfamily. L1/neurofascin/NgCAM family.</text>
</comment>
<sequence length="1284" mass="141852">MMKEKSISASKASLVFFLCQMISALDVPLDSKLLEELSQPPTITQQSPKDYIVDPRENIVIQCEAKGKPPPSFSWTRNGTHFDIDKDAQVTMKPNSGTLVVNIMNGVKAEAYEGVYQCTARNERGAAISNNIVIRPSRSPLWTKEKLEPNHVREGDSLVLNCRPPVGLPPPIIFWMDNAFQRLPQSERVSQGLNGDLYFSNVQPEDTRVDYICYARFNHTQTIQQKQPISVKVFSTKPVTERPPVLLTPMGSTSNKVELRGNVLLLECIAAGLPTPVIRWIKEGGELPANRTFFENFKKTLKIIDVSEADSGNYKCTARNTLGSTHHVISVTVKAAPYWITAPRNLVLSPGEDGTLICRANGNPKPSISWLTNGVPIAIAPEDPSRKVDGDTIIFSAVQERSSAVYQCNASNEYGYLLANAFVNVLAEPPRILTPANKLYQVIADSPALIDCAYFGSPKPEIEWFRGVKGSILRGNEYVFHDNGTLEIPVAQKDSTGTYTCVARNKLGKTQNEVQLEVKDPTMIIKQPQYKVIQRSAQASFECVIKHDPTLIPTVIWLKDNNELPDDERFLVGKDNLTIMNVTDKDDGTYTCIVNTTLDSVSASAVLTVVAAPPTPAIIYARPNPPLDLELTGQLERSIELSWVPGEENNSPITNFVIEYEDGLHEPGVWHYQTEVPGSHTTVQLKLSPYVNYSFRVIAVNEIGRSQPSEPSEQYLTKSANPDENPSNVQGIGSEPDNLVITWESLKGFQSNGPGLQYKVSWRQKDVDDEWTSVVVANVSKYIVSGTPTFVPYEIKVQALNDLGYAPEPSEVIGHSGEDLPMVAPGNVQVHVINSTLAKVHWDPVPLKSVRGHLQGYKVYYWKVQSLSRRSKRHVEKKILTFRGNKTFGMLPGLEPYSSYKLNVRVVNGKGEGPASPDKVFKTPEGVPSPPSFLKITNPTLDSLTLEWGSPTHPNGVLTSYILKFQPINNTHELGPLVEIRIPANESSLILKNLNYSTRYKFYFNAQTSVGSGSQITEEAVTIMDEAGILRPAVGAGKVQPLYPRIRNVTTAAAETYANISWEYEGPDHANFYVEYGVAGSKEDWKKEIVNGSRSFFVLKGLTPGTAYKVRVGAEGLSGFRSSEDLFETGPAMASRQVDIATQGWFIGLMCAVALLILILLIVCFIRRNKGGKYPVKEKEDAHADPEIQPMKEDDGTFGEYRSLESDAEDHKPLKKGSRTPSDRTVKKEDSDDSLVDYGEGVNGQFNEDGSFIGQYSGKKEKEPAEGNESSEAPSPVNAMNSFV</sequence>
<reference key="1">
    <citation type="journal article" date="1991" name="J. Cell Biol.">
        <title>Structure of a new nervous system glycoprotein, Nr-CAM, and its relationship to subgroups of neural cell adhesion molecules.</title>
        <authorList>
            <person name="Grumet M."/>
            <person name="Mauro V."/>
            <person name="Burgoon M.P."/>
            <person name="Edelman G.M."/>
            <person name="Cunningham B.A."/>
        </authorList>
    </citation>
    <scope>NUCLEOTIDE SEQUENCE [MRNA]</scope>
    <scope>PROTEIN SEQUENCE OF 25-52; 178-184 AND 581-594</scope>
    <source>
        <strain>White leghorn</strain>
        <tissue>Embryonic brain</tissue>
    </source>
</reference>
<reference key="2">
    <citation type="journal article" date="1992" name="J. Cell Biol.">
        <title>Bravo/Nr-CAM is closely related to the cell adhesion molecules L1 and Ng-CAM and has a similar heterodimer structure.</title>
        <authorList>
            <person name="Kayyem J.F."/>
            <person name="Roman J.M."/>
            <person name="de la Rosa E.J."/>
            <person name="Schwarz U."/>
            <person name="Dreyer W.J."/>
        </authorList>
    </citation>
    <scope>NUCLEOTIDE SEQUENCE [MRNA] OF 25-1284</scope>
    <scope>PARTIAL PROTEIN SEQUENCE</scope>
    <source>
        <tissue>Embryonic brain</tissue>
        <tissue>Retina</tissue>
    </source>
</reference>
<organism>
    <name type="scientific">Gallus gallus</name>
    <name type="common">Chicken</name>
    <dbReference type="NCBI Taxonomy" id="9031"/>
    <lineage>
        <taxon>Eukaryota</taxon>
        <taxon>Metazoa</taxon>
        <taxon>Chordata</taxon>
        <taxon>Craniata</taxon>
        <taxon>Vertebrata</taxon>
        <taxon>Euteleostomi</taxon>
        <taxon>Archelosauria</taxon>
        <taxon>Archosauria</taxon>
        <taxon>Dinosauria</taxon>
        <taxon>Saurischia</taxon>
        <taxon>Theropoda</taxon>
        <taxon>Coelurosauria</taxon>
        <taxon>Aves</taxon>
        <taxon>Neognathae</taxon>
        <taxon>Galloanserae</taxon>
        <taxon>Galliformes</taxon>
        <taxon>Phasianidae</taxon>
        <taxon>Phasianinae</taxon>
        <taxon>Gallus</taxon>
    </lineage>
</organism>
<proteinExistence type="evidence at protein level"/>
<evidence type="ECO:0000255" key="1"/>
<evidence type="ECO:0000255" key="2">
    <source>
        <dbReference type="PROSITE-ProRule" id="PRU00114"/>
    </source>
</evidence>
<evidence type="ECO:0000255" key="3">
    <source>
        <dbReference type="PROSITE-ProRule" id="PRU00316"/>
    </source>
</evidence>
<evidence type="ECO:0000256" key="4">
    <source>
        <dbReference type="SAM" id="MobiDB-lite"/>
    </source>
</evidence>
<evidence type="ECO:0000269" key="5">
    <source>
    </source>
</evidence>
<evidence type="ECO:0000305" key="6"/>
<protein>
    <recommendedName>
        <fullName>Neuronal cell adhesion molecule</fullName>
        <shortName>Nr-CAM</shortName>
    </recommendedName>
    <alternativeName>
        <fullName>Neuronal surface protein Bravo</fullName>
        <shortName>gBravo</shortName>
    </alternativeName>
    <alternativeName>
        <fullName>NgCAM-related cell adhesion molecule</fullName>
        <shortName>Ng-CAM-related</shortName>
    </alternativeName>
</protein>
<feature type="signal peptide" evidence="5">
    <location>
        <begin position="1"/>
        <end position="24"/>
    </location>
</feature>
<feature type="chain" id="PRO_0000015060" description="Neuronal cell adhesion molecule">
    <location>
        <begin position="25"/>
        <end position="1284"/>
    </location>
</feature>
<feature type="topological domain" description="Extracellular" evidence="1">
    <location>
        <begin position="25"/>
        <end position="1143"/>
    </location>
</feature>
<feature type="transmembrane region" description="Helical" evidence="1">
    <location>
        <begin position="1144"/>
        <end position="1166"/>
    </location>
</feature>
<feature type="topological domain" description="Cytoplasmic" evidence="1">
    <location>
        <begin position="1167"/>
        <end position="1284"/>
    </location>
</feature>
<feature type="domain" description="Ig-like C2-type 1">
    <location>
        <begin position="41"/>
        <end position="129"/>
    </location>
</feature>
<feature type="domain" description="Ig-like C2-type 2">
    <location>
        <begin position="136"/>
        <end position="230"/>
    </location>
</feature>
<feature type="domain" description="Ig-like C2-type 3">
    <location>
        <begin position="243"/>
        <end position="332"/>
    </location>
</feature>
<feature type="domain" description="Ig-like C2-type 4">
    <location>
        <begin position="337"/>
        <end position="424"/>
    </location>
</feature>
<feature type="domain" description="Ig-like C2-type 5">
    <location>
        <begin position="430"/>
        <end position="517"/>
    </location>
</feature>
<feature type="domain" description="Ig-like C2-type 6">
    <location>
        <begin position="521"/>
        <end position="608"/>
    </location>
</feature>
<feature type="domain" description="Fibronectin type-III 1" evidence="3">
    <location>
        <begin position="625"/>
        <end position="720"/>
    </location>
</feature>
<feature type="domain" description="Fibronectin type-III 2" evidence="3">
    <location>
        <begin position="725"/>
        <end position="819"/>
    </location>
</feature>
<feature type="domain" description="Fibronectin type-III 3" evidence="3">
    <location>
        <begin position="824"/>
        <end position="926"/>
    </location>
</feature>
<feature type="domain" description="Fibronectin type-III 4" evidence="3">
    <location>
        <begin position="930"/>
        <end position="1026"/>
    </location>
</feature>
<feature type="domain" description="Fibronectin type-III 5" evidence="3">
    <location>
        <begin position="1040"/>
        <end position="1132"/>
    </location>
</feature>
<feature type="region of interest" description="Disordered" evidence="4">
    <location>
        <begin position="707"/>
        <end position="732"/>
    </location>
</feature>
<feature type="region of interest" description="Disordered" evidence="4">
    <location>
        <begin position="1175"/>
        <end position="1284"/>
    </location>
</feature>
<feature type="compositionally biased region" description="Polar residues" evidence="4">
    <location>
        <begin position="707"/>
        <end position="731"/>
    </location>
</feature>
<feature type="compositionally biased region" description="Basic and acidic residues" evidence="4">
    <location>
        <begin position="1175"/>
        <end position="1195"/>
    </location>
</feature>
<feature type="compositionally biased region" description="Basic and acidic residues" evidence="4">
    <location>
        <begin position="1202"/>
        <end position="1212"/>
    </location>
</feature>
<feature type="compositionally biased region" description="Basic and acidic residues" evidence="4">
    <location>
        <begin position="1221"/>
        <end position="1230"/>
    </location>
</feature>
<feature type="compositionally biased region" description="Polar residues" evidence="4">
    <location>
        <begin position="1268"/>
        <end position="1284"/>
    </location>
</feature>
<feature type="glycosylation site" description="N-linked (GlcNAc...) asparagine" evidence="1">
    <location>
        <position position="78"/>
    </location>
</feature>
<feature type="glycosylation site" description="N-linked (GlcNAc...) asparagine" evidence="1">
    <location>
        <position position="218"/>
    </location>
</feature>
<feature type="glycosylation site" description="N-linked (GlcNAc...) asparagine" evidence="1">
    <location>
        <position position="290"/>
    </location>
</feature>
<feature type="glycosylation site" description="N-linked (GlcNAc...) asparagine" evidence="1">
    <location>
        <position position="409"/>
    </location>
</feature>
<feature type="glycosylation site" description="N-linked (GlcNAc...) asparagine" evidence="1">
    <location>
        <position position="483"/>
    </location>
</feature>
<feature type="glycosylation site" description="N-linked (GlcNAc...) asparagine" evidence="1">
    <location>
        <position position="576"/>
    </location>
</feature>
<feature type="glycosylation site" description="N-linked (GlcNAc...) asparagine" evidence="1">
    <location>
        <position position="581"/>
    </location>
</feature>
<feature type="glycosylation site" description="N-linked (GlcNAc...) asparagine" evidence="1">
    <location>
        <position position="595"/>
    </location>
</feature>
<feature type="glycosylation site" description="N-linked (GlcNAc...) asparagine" evidence="1">
    <location>
        <position position="692"/>
    </location>
</feature>
<feature type="glycosylation site" description="N-linked (GlcNAc...) asparagine" evidence="1">
    <location>
        <position position="778"/>
    </location>
</feature>
<feature type="glycosylation site" description="N-linked (GlcNAc...) asparagine" evidence="1">
    <location>
        <position position="834"/>
    </location>
</feature>
<feature type="glycosylation site" description="N-linked (GlcNAc...) asparagine" evidence="1">
    <location>
        <position position="885"/>
    </location>
</feature>
<feature type="glycosylation site" description="N-linked (GlcNAc...) asparagine" evidence="1">
    <location>
        <position position="969"/>
    </location>
</feature>
<feature type="glycosylation site" description="N-linked (GlcNAc...) asparagine" evidence="1">
    <location>
        <position position="985"/>
    </location>
</feature>
<feature type="glycosylation site" description="N-linked (GlcNAc...) asparagine" evidence="1">
    <location>
        <position position="995"/>
    </location>
</feature>
<feature type="glycosylation site" description="N-linked (GlcNAc...) asparagine" evidence="1">
    <location>
        <position position="1048"/>
    </location>
</feature>
<feature type="glycosylation site" description="N-linked (GlcNAc...) asparagine" evidence="1">
    <location>
        <position position="1059"/>
    </location>
</feature>
<feature type="glycosylation site" description="N-linked (GlcNAc...) asparagine" evidence="1">
    <location>
        <position position="1091"/>
    </location>
</feature>
<feature type="disulfide bond" evidence="2">
    <location>
        <begin position="63"/>
        <end position="118"/>
    </location>
</feature>
<feature type="disulfide bond" evidence="2">
    <location>
        <begin position="162"/>
        <end position="213"/>
    </location>
</feature>
<feature type="disulfide bond" evidence="2">
    <location>
        <begin position="268"/>
        <end position="316"/>
    </location>
</feature>
<feature type="disulfide bond" evidence="2">
    <location>
        <begin position="358"/>
        <end position="408"/>
    </location>
</feature>
<feature type="disulfide bond" evidence="2">
    <location>
        <begin position="452"/>
        <end position="501"/>
    </location>
</feature>
<feature type="disulfide bond" evidence="2">
    <location>
        <begin position="543"/>
        <end position="592"/>
    </location>
</feature>
<feature type="splice variant" id="VSP_002603" description="In isoform 2." evidence="6">
    <location>
        <begin position="612"/>
        <end position="621"/>
    </location>
</feature>
<feature type="splice variant" id="VSP_002604" description="In isoform 3." evidence="6">
    <location>
        <begin position="1027"/>
        <end position="1038"/>
    </location>
</feature>
<feature type="splice variant" id="VSP_002605" description="In isoform 4." evidence="6">
    <location>
        <begin position="1039"/>
        <end position="1131"/>
    </location>
</feature>
<feature type="splice variant" id="VSP_002606" description="In isoform 5." evidence="6">
    <location>
        <begin position="1202"/>
        <end position="1205"/>
    </location>
</feature>
<feature type="sequence conflict" description="In Ref. 2; AAA48632." evidence="6" ref="2">
    <original>V</original>
    <variation>E</variation>
    <location>
        <position position="209"/>
    </location>
</feature>
<feature type="sequence conflict" description="In Ref. 2; AAA48632." evidence="6" ref="2">
    <original>H</original>
    <variation>Q</variation>
    <location>
        <position position="680"/>
    </location>
</feature>
<accession>P35331</accession>